<evidence type="ECO:0000305" key="1"/>
<proteinExistence type="inferred from homology"/>
<sequence>MSLRVRQIDRREWLLAQTATECQRHGQEATLEYPTRQGMWVRLSDAEKRWSAWIQPGDWLEHVSPALAGAAVSAGAEHLVVPWLAATERPFELPVPHLSCRRLCVENPVPGSALPEGKLLHIMSDRGGLWFEYLPELPAVGGGRPKMLRWPLRFVIGSSDTQRSLLGRIGIGDVLLIRTSRAEVYCYAKKLGHFNRVEGGIIVETLDIQHIEEENNTTETAETLPGLNQLPVKLEFVLYRKNVTLAELEAMGQQQLLSLPTNAELNVEIMANGVLLGNGELVQMNDTLGVEIHEWLSESGNGE</sequence>
<comment type="function">
    <text>Involved in a secretory pathway responsible for the surface presentation of determinants needed for the entry of Salmonella species into mammalian cells.</text>
</comment>
<comment type="similarity">
    <text evidence="1">Belongs to the FliN/MopA/SpaO family.</text>
</comment>
<protein>
    <recommendedName>
        <fullName>Surface presentation of antigens protein SpaO</fullName>
    </recommendedName>
</protein>
<accession>P0A1K7</accession>
<accession>Q53968</accession>
<accession>Q54015</accession>
<organism>
    <name type="scientific">Salmonella dublin</name>
    <dbReference type="NCBI Taxonomy" id="98360"/>
    <lineage>
        <taxon>Bacteria</taxon>
        <taxon>Pseudomonadati</taxon>
        <taxon>Pseudomonadota</taxon>
        <taxon>Gammaproteobacteria</taxon>
        <taxon>Enterobacterales</taxon>
        <taxon>Enterobacteriaceae</taxon>
        <taxon>Salmonella</taxon>
    </lineage>
</organism>
<reference key="1">
    <citation type="journal article" date="1995" name="Proc. Natl. Acad. Sci. U.S.A.">
        <title>Relationship between evolutionary rate and cellular location among the Inv/Spa invasion proteins of Salmonella enterica.</title>
        <authorList>
            <person name="Li J."/>
            <person name="Ochman H."/>
            <person name="Groisman E.A."/>
            <person name="Boyd E.F."/>
            <person name="Solomon F."/>
            <person name="Nelson K."/>
            <person name="Selander R.K."/>
        </authorList>
    </citation>
    <scope>NUCLEOTIDE SEQUENCE [GENOMIC DNA]</scope>
    <source>
        <strain>S1518</strain>
    </source>
</reference>
<name>SPAO_SALDU</name>
<dbReference type="EMBL" id="U29345">
    <property type="protein sequence ID" value="AAC43935.1"/>
    <property type="molecule type" value="Genomic_DNA"/>
</dbReference>
<dbReference type="PIR" id="T11206">
    <property type="entry name" value="T11206"/>
</dbReference>
<dbReference type="RefSeq" id="WP_000058730.1">
    <property type="nucleotide sequence ID" value="NZ_VDCP01000001.1"/>
</dbReference>
<dbReference type="PATRIC" id="fig|98360.39.peg.2680"/>
<dbReference type="OMA" id="IYNTKIF"/>
<dbReference type="GO" id="GO:0071978">
    <property type="term" value="P:bacterial-type flagellum-dependent swarming motility"/>
    <property type="evidence" value="ECO:0007669"/>
    <property type="project" value="TreeGrafter"/>
</dbReference>
<dbReference type="GO" id="GO:0050918">
    <property type="term" value="P:positive chemotaxis"/>
    <property type="evidence" value="ECO:0007669"/>
    <property type="project" value="TreeGrafter"/>
</dbReference>
<dbReference type="GO" id="GO:0030254">
    <property type="term" value="P:protein secretion by the type III secretion system"/>
    <property type="evidence" value="ECO:0007669"/>
    <property type="project" value="InterPro"/>
</dbReference>
<dbReference type="Gene3D" id="2.30.330.10">
    <property type="entry name" value="SpoA-like"/>
    <property type="match status" value="1"/>
</dbReference>
<dbReference type="InterPro" id="IPR001543">
    <property type="entry name" value="FliN-like_C"/>
</dbReference>
<dbReference type="InterPro" id="IPR036429">
    <property type="entry name" value="SpoA-like_sf"/>
</dbReference>
<dbReference type="InterPro" id="IPR003283">
    <property type="entry name" value="T3SS_OMP_SpaO"/>
</dbReference>
<dbReference type="InterPro" id="IPR013385">
    <property type="entry name" value="T3SS_SpaO/YscQ/SpaO"/>
</dbReference>
<dbReference type="NCBIfam" id="NF006018">
    <property type="entry name" value="PRK08158.1"/>
    <property type="match status" value="1"/>
</dbReference>
<dbReference type="NCBIfam" id="TIGR02551">
    <property type="entry name" value="SpaO_YscQ"/>
    <property type="match status" value="1"/>
</dbReference>
<dbReference type="PANTHER" id="PTHR30034">
    <property type="entry name" value="FLAGELLAR MOTOR SWITCH PROTEIN FLIM"/>
    <property type="match status" value="1"/>
</dbReference>
<dbReference type="PANTHER" id="PTHR30034:SF5">
    <property type="entry name" value="SECRETION SYSTEM APPARATUS PROTEIN SSAQ"/>
    <property type="match status" value="1"/>
</dbReference>
<dbReference type="Pfam" id="PF01052">
    <property type="entry name" value="FliMN_C"/>
    <property type="match status" value="1"/>
</dbReference>
<dbReference type="PRINTS" id="PR01339">
    <property type="entry name" value="TYPE3OMOPROT"/>
</dbReference>
<dbReference type="SUPFAM" id="SSF101801">
    <property type="entry name" value="Surface presentation of antigens (SPOA)"/>
    <property type="match status" value="1"/>
</dbReference>
<feature type="chain" id="PRO_0000184123" description="Surface presentation of antigens protein SpaO">
    <location>
        <begin position="1"/>
        <end position="303"/>
    </location>
</feature>
<gene>
    <name type="primary">spaO</name>
</gene>
<keyword id="KW-0843">Virulence</keyword>